<sequence length="100" mass="11133">MIREERLLKVLKAPHISEKSTMVAEKQNTIVFKVAVDATKAEVKAAVAKLFEVEVETVRTLNMKGKTKRAGARVGRRSDWKKAYVTLKAGQDIDFMGAAE</sequence>
<proteinExistence type="inferred from homology"/>
<accession>A0KF23</accession>
<organism>
    <name type="scientific">Aeromonas hydrophila subsp. hydrophila (strain ATCC 7966 / DSM 30187 / BCRC 13018 / CCUG 14551 / JCM 1027 / KCTC 2358 / NCIMB 9240 / NCTC 8049)</name>
    <dbReference type="NCBI Taxonomy" id="380703"/>
    <lineage>
        <taxon>Bacteria</taxon>
        <taxon>Pseudomonadati</taxon>
        <taxon>Pseudomonadota</taxon>
        <taxon>Gammaproteobacteria</taxon>
        <taxon>Aeromonadales</taxon>
        <taxon>Aeromonadaceae</taxon>
        <taxon>Aeromonas</taxon>
    </lineage>
</organism>
<comment type="function">
    <text evidence="1">One of the early assembly proteins it binds 23S rRNA. One of the proteins that surrounds the polypeptide exit tunnel on the outside of the ribosome. Forms the main docking site for trigger factor binding to the ribosome.</text>
</comment>
<comment type="subunit">
    <text evidence="1">Part of the 50S ribosomal subunit. Contacts protein L29, and trigger factor when it is bound to the ribosome.</text>
</comment>
<comment type="similarity">
    <text evidence="1">Belongs to the universal ribosomal protein uL23 family.</text>
</comment>
<feature type="chain" id="PRO_1000068033" description="Large ribosomal subunit protein uL23">
    <location>
        <begin position="1"/>
        <end position="100"/>
    </location>
</feature>
<name>RL23_AERHH</name>
<gene>
    <name evidence="1" type="primary">rplW</name>
    <name type="ordered locus">AHA_0311</name>
</gene>
<protein>
    <recommendedName>
        <fullName evidence="1">Large ribosomal subunit protein uL23</fullName>
    </recommendedName>
    <alternativeName>
        <fullName evidence="2">50S ribosomal protein L23</fullName>
    </alternativeName>
</protein>
<dbReference type="EMBL" id="CP000462">
    <property type="protein sequence ID" value="ABK36693.1"/>
    <property type="molecule type" value="Genomic_DNA"/>
</dbReference>
<dbReference type="RefSeq" id="WP_005307955.1">
    <property type="nucleotide sequence ID" value="NC_008570.1"/>
</dbReference>
<dbReference type="RefSeq" id="YP_854841.1">
    <property type="nucleotide sequence ID" value="NC_008570.1"/>
</dbReference>
<dbReference type="SMR" id="A0KF23"/>
<dbReference type="STRING" id="380703.AHA_0311"/>
<dbReference type="EnsemblBacteria" id="ABK36693">
    <property type="protein sequence ID" value="ABK36693"/>
    <property type="gene ID" value="AHA_0311"/>
</dbReference>
<dbReference type="GeneID" id="97858396"/>
<dbReference type="KEGG" id="aha:AHA_0311"/>
<dbReference type="PATRIC" id="fig|380703.7.peg.300"/>
<dbReference type="eggNOG" id="COG0089">
    <property type="taxonomic scope" value="Bacteria"/>
</dbReference>
<dbReference type="HOGENOM" id="CLU_037562_3_1_6"/>
<dbReference type="OrthoDB" id="9793353at2"/>
<dbReference type="PRO" id="PR:A0KF23"/>
<dbReference type="Proteomes" id="UP000000756">
    <property type="component" value="Chromosome"/>
</dbReference>
<dbReference type="GO" id="GO:1990904">
    <property type="term" value="C:ribonucleoprotein complex"/>
    <property type="evidence" value="ECO:0007669"/>
    <property type="project" value="UniProtKB-KW"/>
</dbReference>
<dbReference type="GO" id="GO:0005840">
    <property type="term" value="C:ribosome"/>
    <property type="evidence" value="ECO:0007669"/>
    <property type="project" value="UniProtKB-KW"/>
</dbReference>
<dbReference type="GO" id="GO:0019843">
    <property type="term" value="F:rRNA binding"/>
    <property type="evidence" value="ECO:0007669"/>
    <property type="project" value="UniProtKB-UniRule"/>
</dbReference>
<dbReference type="GO" id="GO:0003735">
    <property type="term" value="F:structural constituent of ribosome"/>
    <property type="evidence" value="ECO:0007669"/>
    <property type="project" value="InterPro"/>
</dbReference>
<dbReference type="GO" id="GO:0006412">
    <property type="term" value="P:translation"/>
    <property type="evidence" value="ECO:0007669"/>
    <property type="project" value="UniProtKB-UniRule"/>
</dbReference>
<dbReference type="FunFam" id="3.30.70.330:FF:000001">
    <property type="entry name" value="50S ribosomal protein L23"/>
    <property type="match status" value="1"/>
</dbReference>
<dbReference type="Gene3D" id="3.30.70.330">
    <property type="match status" value="1"/>
</dbReference>
<dbReference type="HAMAP" id="MF_01369_B">
    <property type="entry name" value="Ribosomal_uL23_B"/>
    <property type="match status" value="1"/>
</dbReference>
<dbReference type="InterPro" id="IPR012677">
    <property type="entry name" value="Nucleotide-bd_a/b_plait_sf"/>
</dbReference>
<dbReference type="InterPro" id="IPR013025">
    <property type="entry name" value="Ribosomal_uL23-like"/>
</dbReference>
<dbReference type="InterPro" id="IPR012678">
    <property type="entry name" value="Ribosomal_uL23/eL15/eS24_sf"/>
</dbReference>
<dbReference type="InterPro" id="IPR001014">
    <property type="entry name" value="Ribosomal_uL23_CS"/>
</dbReference>
<dbReference type="NCBIfam" id="NF004358">
    <property type="entry name" value="PRK05738.1-1"/>
    <property type="match status" value="1"/>
</dbReference>
<dbReference type="NCBIfam" id="NF004359">
    <property type="entry name" value="PRK05738.1-3"/>
    <property type="match status" value="1"/>
</dbReference>
<dbReference type="NCBIfam" id="NF004363">
    <property type="entry name" value="PRK05738.2-4"/>
    <property type="match status" value="1"/>
</dbReference>
<dbReference type="NCBIfam" id="NF004366">
    <property type="entry name" value="PRK05738.3-2"/>
    <property type="match status" value="1"/>
</dbReference>
<dbReference type="PANTHER" id="PTHR11620">
    <property type="entry name" value="60S RIBOSOMAL PROTEIN L23A"/>
    <property type="match status" value="1"/>
</dbReference>
<dbReference type="Pfam" id="PF00276">
    <property type="entry name" value="Ribosomal_L23"/>
    <property type="match status" value="1"/>
</dbReference>
<dbReference type="SUPFAM" id="SSF54189">
    <property type="entry name" value="Ribosomal proteins S24e, L23 and L15e"/>
    <property type="match status" value="1"/>
</dbReference>
<dbReference type="PROSITE" id="PS00050">
    <property type="entry name" value="RIBOSOMAL_L23"/>
    <property type="match status" value="1"/>
</dbReference>
<keyword id="KW-1185">Reference proteome</keyword>
<keyword id="KW-0687">Ribonucleoprotein</keyword>
<keyword id="KW-0689">Ribosomal protein</keyword>
<keyword id="KW-0694">RNA-binding</keyword>
<keyword id="KW-0699">rRNA-binding</keyword>
<evidence type="ECO:0000255" key="1">
    <source>
        <dbReference type="HAMAP-Rule" id="MF_01369"/>
    </source>
</evidence>
<evidence type="ECO:0000305" key="2"/>
<reference key="1">
    <citation type="journal article" date="2006" name="J. Bacteriol.">
        <title>Genome sequence of Aeromonas hydrophila ATCC 7966T: jack of all trades.</title>
        <authorList>
            <person name="Seshadri R."/>
            <person name="Joseph S.W."/>
            <person name="Chopra A.K."/>
            <person name="Sha J."/>
            <person name="Shaw J."/>
            <person name="Graf J."/>
            <person name="Haft D.H."/>
            <person name="Wu M."/>
            <person name="Ren Q."/>
            <person name="Rosovitz M.J."/>
            <person name="Madupu R."/>
            <person name="Tallon L."/>
            <person name="Kim M."/>
            <person name="Jin S."/>
            <person name="Vuong H."/>
            <person name="Stine O.C."/>
            <person name="Ali A."/>
            <person name="Horneman A.J."/>
            <person name="Heidelberg J.F."/>
        </authorList>
    </citation>
    <scope>NUCLEOTIDE SEQUENCE [LARGE SCALE GENOMIC DNA]</scope>
    <source>
        <strain>ATCC 7966 / DSM 30187 / BCRC 13018 / CCUG 14551 / JCM 1027 / KCTC 2358 / NCIMB 9240 / NCTC 8049</strain>
    </source>
</reference>